<dbReference type="EC" id="4.1.3.27"/>
<dbReference type="EMBL" id="AB030011">
    <property type="protein sequence ID" value="BAA82547.1"/>
    <property type="molecule type" value="Genomic_DNA"/>
</dbReference>
<dbReference type="EMBL" id="AP006878">
    <property type="protein sequence ID" value="BAD84443.1"/>
    <property type="molecule type" value="Genomic_DNA"/>
</dbReference>
<dbReference type="PIR" id="T43924">
    <property type="entry name" value="T43924"/>
</dbReference>
<dbReference type="RefSeq" id="WP_011249209.1">
    <property type="nucleotide sequence ID" value="NC_006624.1"/>
</dbReference>
<dbReference type="SMR" id="Q9YGB3"/>
<dbReference type="FunCoup" id="Q9YGB3">
    <property type="interactions" value="110"/>
</dbReference>
<dbReference type="STRING" id="69014.TK0254"/>
<dbReference type="EnsemblBacteria" id="BAD84443">
    <property type="protein sequence ID" value="BAD84443"/>
    <property type="gene ID" value="TK0254"/>
</dbReference>
<dbReference type="GeneID" id="3235373"/>
<dbReference type="KEGG" id="tko:TK0254"/>
<dbReference type="PATRIC" id="fig|69014.16.peg.253"/>
<dbReference type="eggNOG" id="arCOG02014">
    <property type="taxonomic scope" value="Archaea"/>
</dbReference>
<dbReference type="HOGENOM" id="CLU_006493_9_3_2"/>
<dbReference type="InParanoid" id="Q9YGB3"/>
<dbReference type="OrthoDB" id="25514at2157"/>
<dbReference type="PhylomeDB" id="Q9YGB3"/>
<dbReference type="BRENDA" id="4.1.3.27">
    <property type="organism ID" value="5246"/>
</dbReference>
<dbReference type="UniPathway" id="UPA00035">
    <property type="reaction ID" value="UER00040"/>
</dbReference>
<dbReference type="Proteomes" id="UP000000536">
    <property type="component" value="Chromosome"/>
</dbReference>
<dbReference type="GO" id="GO:0004049">
    <property type="term" value="F:anthranilate synthase activity"/>
    <property type="evidence" value="ECO:0007669"/>
    <property type="project" value="UniProtKB-EC"/>
</dbReference>
<dbReference type="GO" id="GO:0046872">
    <property type="term" value="F:metal ion binding"/>
    <property type="evidence" value="ECO:0007669"/>
    <property type="project" value="UniProtKB-KW"/>
</dbReference>
<dbReference type="GO" id="GO:0000162">
    <property type="term" value="P:L-tryptophan biosynthetic process"/>
    <property type="evidence" value="ECO:0000318"/>
    <property type="project" value="GO_Central"/>
</dbReference>
<dbReference type="Gene3D" id="3.60.120.10">
    <property type="entry name" value="Anthranilate synthase"/>
    <property type="match status" value="1"/>
</dbReference>
<dbReference type="InterPro" id="IPR005801">
    <property type="entry name" value="ADC_synthase"/>
</dbReference>
<dbReference type="InterPro" id="IPR019999">
    <property type="entry name" value="Anth_synth_I-like"/>
</dbReference>
<dbReference type="InterPro" id="IPR006805">
    <property type="entry name" value="Anth_synth_I_N"/>
</dbReference>
<dbReference type="InterPro" id="IPR010116">
    <property type="entry name" value="Anthranilate_synth_I_arc_typ"/>
</dbReference>
<dbReference type="InterPro" id="IPR015890">
    <property type="entry name" value="Chorismate_C"/>
</dbReference>
<dbReference type="NCBIfam" id="NF010087">
    <property type="entry name" value="PRK13572.1"/>
    <property type="match status" value="1"/>
</dbReference>
<dbReference type="NCBIfam" id="TIGR01820">
    <property type="entry name" value="TrpE-arch"/>
    <property type="match status" value="1"/>
</dbReference>
<dbReference type="PANTHER" id="PTHR11236">
    <property type="entry name" value="AMINOBENZOATE/ANTHRANILATE SYNTHASE"/>
    <property type="match status" value="1"/>
</dbReference>
<dbReference type="PANTHER" id="PTHR11236:SF9">
    <property type="entry name" value="ANTHRANILATE SYNTHASE COMPONENT 1"/>
    <property type="match status" value="1"/>
</dbReference>
<dbReference type="Pfam" id="PF04715">
    <property type="entry name" value="Anth_synt_I_N"/>
    <property type="match status" value="1"/>
</dbReference>
<dbReference type="Pfam" id="PF00425">
    <property type="entry name" value="Chorismate_bind"/>
    <property type="match status" value="1"/>
</dbReference>
<dbReference type="PRINTS" id="PR00095">
    <property type="entry name" value="ANTSNTHASEI"/>
</dbReference>
<dbReference type="SUPFAM" id="SSF56322">
    <property type="entry name" value="ADC synthase"/>
    <property type="match status" value="1"/>
</dbReference>
<proteinExistence type="inferred from homology"/>
<gene>
    <name type="primary">trpE</name>
    <name type="ordered locus">TK0254</name>
</gene>
<protein>
    <recommendedName>
        <fullName>Anthranilate synthase component 1</fullName>
        <shortName>AS</shortName>
        <shortName>ASI</shortName>
        <ecNumber>4.1.3.27</ecNumber>
    </recommendedName>
</protein>
<evidence type="ECO:0000250" key="1"/>
<evidence type="ECO:0000250" key="2">
    <source>
        <dbReference type="UniProtKB" id="P00897"/>
    </source>
</evidence>
<evidence type="ECO:0000305" key="3"/>
<comment type="function">
    <text evidence="1">Part of a heterotetrameric complex that catalyzes the two-step biosynthesis of anthranilate, an intermediate in the biosynthesis of L-tryptophan. In the first step, the glutamine-binding beta subunit (TrpG) of anthranilate synthase (AS) provides the glutamine amidotransferase activity which generates ammonia as a substrate that, along with chorismate, is used in the second step, catalyzed by the large alpha subunit of AS (TrpE) to produce anthranilate. In the absence of TrpG, TrpE can synthesize anthranilate directly from chorismate and high concentrations of ammonia (By similarity).</text>
</comment>
<comment type="catalytic activity">
    <reaction>
        <text>chorismate + L-glutamine = anthranilate + pyruvate + L-glutamate + H(+)</text>
        <dbReference type="Rhea" id="RHEA:21732"/>
        <dbReference type="ChEBI" id="CHEBI:15361"/>
        <dbReference type="ChEBI" id="CHEBI:15378"/>
        <dbReference type="ChEBI" id="CHEBI:16567"/>
        <dbReference type="ChEBI" id="CHEBI:29748"/>
        <dbReference type="ChEBI" id="CHEBI:29985"/>
        <dbReference type="ChEBI" id="CHEBI:58359"/>
        <dbReference type="EC" id="4.1.3.27"/>
    </reaction>
</comment>
<comment type="cofactor">
    <cofactor evidence="2">
        <name>Mg(2+)</name>
        <dbReference type="ChEBI" id="CHEBI:18420"/>
    </cofactor>
    <text evidence="2">Binds 1 Mg(2+) ion per subunit.</text>
</comment>
<comment type="activity regulation">
    <text evidence="1">Feedback inhibited by tryptophan.</text>
</comment>
<comment type="pathway">
    <text>Amino-acid biosynthesis; L-tryptophan biosynthesis; L-tryptophan from chorismate: step 1/5.</text>
</comment>
<comment type="subunit">
    <text evidence="1">Heterotetramer consisting of two non-identical subunits: a beta subunit (TrpG) and a large alpha subunit (TrpE).</text>
</comment>
<comment type="similarity">
    <text evidence="3">Belongs to the anthranilate synthase component I family.</text>
</comment>
<reference key="1">
    <citation type="journal article" date="1999" name="Mol. Gen. Genet.">
        <title>The tryptophan biosynthesis gene cluster trpCDEGFBA from Pyrococcus kodakaraensis KOD1 is regulated at the transcriptional level and expressed as a single mRNA.</title>
        <authorList>
            <person name="Tang X."/>
            <person name="Ezaki S."/>
            <person name="Fujiwara S."/>
            <person name="Takagi M."/>
            <person name="Atomi H."/>
            <person name="Imanaka T."/>
        </authorList>
    </citation>
    <scope>NUCLEOTIDE SEQUENCE [GENOMIC DNA]</scope>
    <source>
        <strain>ATCC BAA-918 / JCM 12380 / KOD1</strain>
    </source>
</reference>
<reference key="2">
    <citation type="journal article" date="2005" name="Genome Res.">
        <title>Complete genome sequence of the hyperthermophilic archaeon Thermococcus kodakaraensis KOD1 and comparison with Pyrococcus genomes.</title>
        <authorList>
            <person name="Fukui T."/>
            <person name="Atomi H."/>
            <person name="Kanai T."/>
            <person name="Matsumi R."/>
            <person name="Fujiwara S."/>
            <person name="Imanaka T."/>
        </authorList>
    </citation>
    <scope>NUCLEOTIDE SEQUENCE [LARGE SCALE GENOMIC DNA]</scope>
    <source>
        <strain>ATCC BAA-918 / JCM 12380 / KOD1</strain>
    </source>
</reference>
<feature type="chain" id="PRO_0000154131" description="Anthranilate synthase component 1">
    <location>
        <begin position="1"/>
        <end position="433"/>
    </location>
</feature>
<feature type="binding site" evidence="2">
    <location>
        <position position="29"/>
    </location>
    <ligand>
        <name>L-tryptophan</name>
        <dbReference type="ChEBI" id="CHEBI:57912"/>
    </ligand>
</feature>
<feature type="binding site" evidence="2">
    <location>
        <begin position="219"/>
        <end position="221"/>
    </location>
    <ligand>
        <name>L-tryptophan</name>
        <dbReference type="ChEBI" id="CHEBI:57912"/>
    </ligand>
</feature>
<feature type="binding site" evidence="2">
    <location>
        <begin position="253"/>
        <end position="254"/>
    </location>
    <ligand>
        <name>chorismate</name>
        <dbReference type="ChEBI" id="CHEBI:29748"/>
    </ligand>
</feature>
<feature type="binding site" evidence="2">
    <location>
        <position position="280"/>
    </location>
    <ligand>
        <name>Mg(2+)</name>
        <dbReference type="ChEBI" id="CHEBI:18420"/>
    </ligand>
</feature>
<feature type="binding site" evidence="2">
    <location>
        <position position="368"/>
    </location>
    <ligand>
        <name>chorismate</name>
        <dbReference type="ChEBI" id="CHEBI:29748"/>
    </ligand>
</feature>
<feature type="binding site" evidence="2">
    <location>
        <position position="388"/>
    </location>
    <ligand>
        <name>chorismate</name>
        <dbReference type="ChEBI" id="CHEBI:29748"/>
    </ligand>
</feature>
<feature type="binding site" evidence="2">
    <location>
        <begin position="402"/>
        <end position="404"/>
    </location>
    <ligand>
        <name>chorismate</name>
        <dbReference type="ChEBI" id="CHEBI:29748"/>
    </ligand>
</feature>
<feature type="binding site" evidence="2">
    <location>
        <position position="404"/>
    </location>
    <ligand>
        <name>chorismate</name>
        <dbReference type="ChEBI" id="CHEBI:29748"/>
    </ligand>
</feature>
<feature type="binding site" evidence="2">
    <location>
        <position position="417"/>
    </location>
    <ligand>
        <name>Mg(2+)</name>
        <dbReference type="ChEBI" id="CHEBI:18420"/>
    </ligand>
</feature>
<organism>
    <name type="scientific">Thermococcus kodakarensis (strain ATCC BAA-918 / JCM 12380 / KOD1)</name>
    <name type="common">Pyrococcus kodakaraensis (strain KOD1)</name>
    <dbReference type="NCBI Taxonomy" id="69014"/>
    <lineage>
        <taxon>Archaea</taxon>
        <taxon>Methanobacteriati</taxon>
        <taxon>Methanobacteriota</taxon>
        <taxon>Thermococci</taxon>
        <taxon>Thermococcales</taxon>
        <taxon>Thermococcaceae</taxon>
        <taxon>Thermococcus</taxon>
    </lineage>
</organism>
<accession>Q9YGB3</accession>
<name>TRPE_THEKO</name>
<keyword id="KW-0028">Amino-acid biosynthesis</keyword>
<keyword id="KW-0057">Aromatic amino acid biosynthesis</keyword>
<keyword id="KW-0456">Lyase</keyword>
<keyword id="KW-0460">Magnesium</keyword>
<keyword id="KW-0479">Metal-binding</keyword>
<keyword id="KW-1185">Reference proteome</keyword>
<keyword id="KW-0822">Tryptophan biosynthesis</keyword>
<sequence>MPLKKLKPVDPLKLYSALRDFGMPFMLRSAEKDSRKARFTYISAEPEFVVEVGEGTEIDGERVSDERNPLRALKGLMGERVEGRRFMGGFVGYVSYDSVHSIIGGKIEEPSVFGYYPWTFIYDHSTGALSFFYLREAPFDPEALVERARREESRLEDGGSEVISTDAGMEEFVEIVRAGKEYIYSGDVFQVVLSREYRVRTDLDALEIYKRLVELNPSPYTFILEFEKTVVGASPETMGSVEGRTFKINPIAGTAPRGRTGEEDRELEKALLSDEKERAEHVMLVDLARNDVRRVSKPGSVRLTRFFDVLKYSHVQHIESEVVGELDEGKNAFDAMEAAFPAGTLTGAPKIRAMEIIDELERSRRKVYGGAVGYFSLTGDADMAIAIRMAEIEGRKASVRAGAGIVADSVPEKEFFETENKMRAVLKALGVRE</sequence>